<keyword id="KW-0012">Acyltransferase</keyword>
<keyword id="KW-0133">Cell shape</keyword>
<keyword id="KW-0961">Cell wall biogenesis/degradation</keyword>
<keyword id="KW-0963">Cytoplasm</keyword>
<keyword id="KW-0460">Magnesium</keyword>
<keyword id="KW-0479">Metal-binding</keyword>
<keyword id="KW-0511">Multifunctional enzyme</keyword>
<keyword id="KW-0548">Nucleotidyltransferase</keyword>
<keyword id="KW-0573">Peptidoglycan synthesis</keyword>
<keyword id="KW-0677">Repeat</keyword>
<keyword id="KW-0808">Transferase</keyword>
<protein>
    <recommendedName>
        <fullName evidence="1">Bifunctional protein GlmU</fullName>
    </recommendedName>
    <domain>
        <recommendedName>
            <fullName evidence="1">UDP-N-acetylglucosamine pyrophosphorylase</fullName>
            <ecNumber evidence="1">2.7.7.23</ecNumber>
        </recommendedName>
        <alternativeName>
            <fullName evidence="1">N-acetylglucosamine-1-phosphate uridyltransferase</fullName>
        </alternativeName>
    </domain>
    <domain>
        <recommendedName>
            <fullName evidence="1">Glucosamine-1-phosphate N-acetyltransferase</fullName>
            <ecNumber evidence="1">2.3.1.157</ecNumber>
        </recommendedName>
    </domain>
</protein>
<sequence length="492" mass="51160">MIPENTGPAAVIVLAAGAGTRMKSRTPKILHEIGGRSMVGHALLAARSIEPRQLAIVVRHERDLVAGHVAELDPSAAIVDQDEVPGTGRAVEVALQALDAKEELTGTVVVTYGDVPLLSGGLLAELVATHEREANAVTVLTAVLDDATGYGRILRGEDGTVTGIREHKDSTDEERLIREVNSGIYAFDAAVLREALGKVTTDNAQGEKYLTDVLGLAREAGGRVAAVVTADRWQVEGANDRVQLAALGAELNRRTVEAWMRAGVTVVDPSTTWIDSSVTLDEDVRLLPNTQLHGSTSVARDAVVGPDTTLTDVEVGEGATVIRTHGSGSVIGPRAAVGPFTYLRPGTVLGEKGKIGAFYETKNVTIGRGSKLSHLGYAGDAEIGEDTNIGCGNITANYDGEKKHRTVIGSGVRTGSNTVFVAPVTVGDGAYSGAGAVIRKDVPAGALALSIAAQRNTEGWVPANRPGSRSAELAQAAINNSSSTPASTEEGK</sequence>
<evidence type="ECO:0000255" key="1">
    <source>
        <dbReference type="HAMAP-Rule" id="MF_01631"/>
    </source>
</evidence>
<evidence type="ECO:0000256" key="2">
    <source>
        <dbReference type="SAM" id="MobiDB-lite"/>
    </source>
</evidence>
<comment type="function">
    <text evidence="1">Catalyzes the last two sequential reactions in the de novo biosynthetic pathway for UDP-N-acetylglucosamine (UDP-GlcNAc). The C-terminal domain catalyzes the transfer of acetyl group from acetyl coenzyme A to glucosamine-1-phosphate (GlcN-1-P) to produce N-acetylglucosamine-1-phosphate (GlcNAc-1-P), which is converted into UDP-GlcNAc by the transfer of uridine 5-monophosphate (from uridine 5-triphosphate), a reaction catalyzed by the N-terminal domain.</text>
</comment>
<comment type="catalytic activity">
    <reaction evidence="1">
        <text>alpha-D-glucosamine 1-phosphate + acetyl-CoA = N-acetyl-alpha-D-glucosamine 1-phosphate + CoA + H(+)</text>
        <dbReference type="Rhea" id="RHEA:13725"/>
        <dbReference type="ChEBI" id="CHEBI:15378"/>
        <dbReference type="ChEBI" id="CHEBI:57287"/>
        <dbReference type="ChEBI" id="CHEBI:57288"/>
        <dbReference type="ChEBI" id="CHEBI:57776"/>
        <dbReference type="ChEBI" id="CHEBI:58516"/>
        <dbReference type="EC" id="2.3.1.157"/>
    </reaction>
</comment>
<comment type="catalytic activity">
    <reaction evidence="1">
        <text>N-acetyl-alpha-D-glucosamine 1-phosphate + UTP + H(+) = UDP-N-acetyl-alpha-D-glucosamine + diphosphate</text>
        <dbReference type="Rhea" id="RHEA:13509"/>
        <dbReference type="ChEBI" id="CHEBI:15378"/>
        <dbReference type="ChEBI" id="CHEBI:33019"/>
        <dbReference type="ChEBI" id="CHEBI:46398"/>
        <dbReference type="ChEBI" id="CHEBI:57705"/>
        <dbReference type="ChEBI" id="CHEBI:57776"/>
        <dbReference type="EC" id="2.7.7.23"/>
    </reaction>
</comment>
<comment type="cofactor">
    <cofactor evidence="1">
        <name>Mg(2+)</name>
        <dbReference type="ChEBI" id="CHEBI:18420"/>
    </cofactor>
    <text evidence="1">Binds 1 Mg(2+) ion per subunit.</text>
</comment>
<comment type="pathway">
    <text evidence="1">Nucleotide-sugar biosynthesis; UDP-N-acetyl-alpha-D-glucosamine biosynthesis; N-acetyl-alpha-D-glucosamine 1-phosphate from alpha-D-glucosamine 6-phosphate (route II): step 2/2.</text>
</comment>
<comment type="pathway">
    <text evidence="1">Nucleotide-sugar biosynthesis; UDP-N-acetyl-alpha-D-glucosamine biosynthesis; UDP-N-acetyl-alpha-D-glucosamine from N-acetyl-alpha-D-glucosamine 1-phosphate: step 1/1.</text>
</comment>
<comment type="pathway">
    <text evidence="1">Bacterial outer membrane biogenesis; LPS lipid A biosynthesis.</text>
</comment>
<comment type="subunit">
    <text evidence="1">Homotrimer.</text>
</comment>
<comment type="subcellular location">
    <subcellularLocation>
        <location evidence="1">Cytoplasm</location>
    </subcellularLocation>
</comment>
<comment type="similarity">
    <text evidence="1">In the N-terminal section; belongs to the N-acetylglucosamine-1-phosphate uridyltransferase family.</text>
</comment>
<comment type="similarity">
    <text evidence="1">In the C-terminal section; belongs to the transferase hexapeptide repeat family.</text>
</comment>
<proteinExistence type="inferred from homology"/>
<feature type="chain" id="PRO_1000186395" description="Bifunctional protein GlmU">
    <location>
        <begin position="1"/>
        <end position="492"/>
    </location>
</feature>
<feature type="region of interest" description="Pyrophosphorylase" evidence="1">
    <location>
        <begin position="1"/>
        <end position="241"/>
    </location>
</feature>
<feature type="region of interest" description="Linker" evidence="1">
    <location>
        <begin position="242"/>
        <end position="262"/>
    </location>
</feature>
<feature type="region of interest" description="N-acetyltransferase" evidence="1">
    <location>
        <begin position="263"/>
        <end position="492"/>
    </location>
</feature>
<feature type="region of interest" description="Disordered" evidence="2">
    <location>
        <begin position="460"/>
        <end position="492"/>
    </location>
</feature>
<feature type="compositionally biased region" description="Polar residues" evidence="2">
    <location>
        <begin position="477"/>
        <end position="492"/>
    </location>
</feature>
<feature type="active site" description="Proton acceptor" evidence="1">
    <location>
        <position position="374"/>
    </location>
</feature>
<feature type="binding site" evidence="1">
    <location>
        <begin position="14"/>
        <end position="17"/>
    </location>
    <ligand>
        <name>UDP-N-acetyl-alpha-D-glucosamine</name>
        <dbReference type="ChEBI" id="CHEBI:57705"/>
    </ligand>
</feature>
<feature type="binding site" evidence="1">
    <location>
        <position position="28"/>
    </location>
    <ligand>
        <name>UDP-N-acetyl-alpha-D-glucosamine</name>
        <dbReference type="ChEBI" id="CHEBI:57705"/>
    </ligand>
</feature>
<feature type="binding site" evidence="1">
    <location>
        <position position="81"/>
    </location>
    <ligand>
        <name>UDP-N-acetyl-alpha-D-glucosamine</name>
        <dbReference type="ChEBI" id="CHEBI:57705"/>
    </ligand>
</feature>
<feature type="binding site" evidence="1">
    <location>
        <begin position="86"/>
        <end position="87"/>
    </location>
    <ligand>
        <name>UDP-N-acetyl-alpha-D-glucosamine</name>
        <dbReference type="ChEBI" id="CHEBI:57705"/>
    </ligand>
</feature>
<feature type="binding site" evidence="1">
    <location>
        <begin position="112"/>
        <end position="114"/>
    </location>
    <ligand>
        <name>UDP-N-acetyl-alpha-D-glucosamine</name>
        <dbReference type="ChEBI" id="CHEBI:57705"/>
    </ligand>
</feature>
<feature type="binding site" evidence="1">
    <location>
        <position position="114"/>
    </location>
    <ligand>
        <name>Mg(2+)</name>
        <dbReference type="ChEBI" id="CHEBI:18420"/>
    </ligand>
</feature>
<feature type="binding site" evidence="1">
    <location>
        <position position="151"/>
    </location>
    <ligand>
        <name>UDP-N-acetyl-alpha-D-glucosamine</name>
        <dbReference type="ChEBI" id="CHEBI:57705"/>
    </ligand>
</feature>
<feature type="binding site" evidence="1">
    <location>
        <position position="166"/>
    </location>
    <ligand>
        <name>UDP-N-acetyl-alpha-D-glucosamine</name>
        <dbReference type="ChEBI" id="CHEBI:57705"/>
    </ligand>
</feature>
<feature type="binding site" evidence="1">
    <location>
        <position position="181"/>
    </location>
    <ligand>
        <name>UDP-N-acetyl-alpha-D-glucosamine</name>
        <dbReference type="ChEBI" id="CHEBI:57705"/>
    </ligand>
</feature>
<feature type="binding site" evidence="1">
    <location>
        <position position="239"/>
    </location>
    <ligand>
        <name>Mg(2+)</name>
        <dbReference type="ChEBI" id="CHEBI:18420"/>
    </ligand>
</feature>
<feature type="binding site" evidence="1">
    <location>
        <position position="239"/>
    </location>
    <ligand>
        <name>UDP-N-acetyl-alpha-D-glucosamine</name>
        <dbReference type="ChEBI" id="CHEBI:57705"/>
    </ligand>
</feature>
<feature type="binding site" evidence="1">
    <location>
        <position position="344"/>
    </location>
    <ligand>
        <name>UDP-N-acetyl-alpha-D-glucosamine</name>
        <dbReference type="ChEBI" id="CHEBI:57705"/>
    </ligand>
</feature>
<feature type="binding site" evidence="1">
    <location>
        <position position="362"/>
    </location>
    <ligand>
        <name>UDP-N-acetyl-alpha-D-glucosamine</name>
        <dbReference type="ChEBI" id="CHEBI:57705"/>
    </ligand>
</feature>
<feature type="binding site" evidence="1">
    <location>
        <position position="377"/>
    </location>
    <ligand>
        <name>UDP-N-acetyl-alpha-D-glucosamine</name>
        <dbReference type="ChEBI" id="CHEBI:57705"/>
    </ligand>
</feature>
<feature type="binding site" evidence="1">
    <location>
        <position position="388"/>
    </location>
    <ligand>
        <name>UDP-N-acetyl-alpha-D-glucosamine</name>
        <dbReference type="ChEBI" id="CHEBI:57705"/>
    </ligand>
</feature>
<feature type="binding site" evidence="1">
    <location>
        <begin position="397"/>
        <end position="398"/>
    </location>
    <ligand>
        <name>acetyl-CoA</name>
        <dbReference type="ChEBI" id="CHEBI:57288"/>
    </ligand>
</feature>
<feature type="binding site" evidence="1">
    <location>
        <position position="416"/>
    </location>
    <ligand>
        <name>acetyl-CoA</name>
        <dbReference type="ChEBI" id="CHEBI:57288"/>
    </ligand>
</feature>
<feature type="binding site" evidence="1">
    <location>
        <position position="434"/>
    </location>
    <ligand>
        <name>acetyl-CoA</name>
        <dbReference type="ChEBI" id="CHEBI:57288"/>
    </ligand>
</feature>
<dbReference type="EC" id="2.7.7.23" evidence="1"/>
<dbReference type="EC" id="2.3.1.157" evidence="1"/>
<dbReference type="EMBL" id="CP001341">
    <property type="protein sequence ID" value="ACL39278.1"/>
    <property type="molecule type" value="Genomic_DNA"/>
</dbReference>
<dbReference type="RefSeq" id="WP_015936501.1">
    <property type="nucleotide sequence ID" value="NC_011886.1"/>
</dbReference>
<dbReference type="SMR" id="B8HFD9"/>
<dbReference type="STRING" id="452863.Achl_1287"/>
<dbReference type="KEGG" id="ach:Achl_1287"/>
<dbReference type="eggNOG" id="COG1207">
    <property type="taxonomic scope" value="Bacteria"/>
</dbReference>
<dbReference type="HOGENOM" id="CLU_029499_15_2_11"/>
<dbReference type="OrthoDB" id="9775031at2"/>
<dbReference type="UniPathway" id="UPA00113">
    <property type="reaction ID" value="UER00532"/>
</dbReference>
<dbReference type="UniPathway" id="UPA00113">
    <property type="reaction ID" value="UER00533"/>
</dbReference>
<dbReference type="UniPathway" id="UPA00973"/>
<dbReference type="Proteomes" id="UP000002505">
    <property type="component" value="Chromosome"/>
</dbReference>
<dbReference type="GO" id="GO:0005737">
    <property type="term" value="C:cytoplasm"/>
    <property type="evidence" value="ECO:0007669"/>
    <property type="project" value="UniProtKB-SubCell"/>
</dbReference>
<dbReference type="GO" id="GO:0016020">
    <property type="term" value="C:membrane"/>
    <property type="evidence" value="ECO:0007669"/>
    <property type="project" value="GOC"/>
</dbReference>
<dbReference type="GO" id="GO:0019134">
    <property type="term" value="F:glucosamine-1-phosphate N-acetyltransferase activity"/>
    <property type="evidence" value="ECO:0007669"/>
    <property type="project" value="UniProtKB-UniRule"/>
</dbReference>
<dbReference type="GO" id="GO:0000287">
    <property type="term" value="F:magnesium ion binding"/>
    <property type="evidence" value="ECO:0007669"/>
    <property type="project" value="UniProtKB-UniRule"/>
</dbReference>
<dbReference type="GO" id="GO:0003977">
    <property type="term" value="F:UDP-N-acetylglucosamine diphosphorylase activity"/>
    <property type="evidence" value="ECO:0007669"/>
    <property type="project" value="UniProtKB-UniRule"/>
</dbReference>
<dbReference type="GO" id="GO:0000902">
    <property type="term" value="P:cell morphogenesis"/>
    <property type="evidence" value="ECO:0007669"/>
    <property type="project" value="UniProtKB-UniRule"/>
</dbReference>
<dbReference type="GO" id="GO:0071555">
    <property type="term" value="P:cell wall organization"/>
    <property type="evidence" value="ECO:0007669"/>
    <property type="project" value="UniProtKB-KW"/>
</dbReference>
<dbReference type="GO" id="GO:0009245">
    <property type="term" value="P:lipid A biosynthetic process"/>
    <property type="evidence" value="ECO:0007669"/>
    <property type="project" value="UniProtKB-UniRule"/>
</dbReference>
<dbReference type="GO" id="GO:0009252">
    <property type="term" value="P:peptidoglycan biosynthetic process"/>
    <property type="evidence" value="ECO:0007669"/>
    <property type="project" value="UniProtKB-UniRule"/>
</dbReference>
<dbReference type="GO" id="GO:0008360">
    <property type="term" value="P:regulation of cell shape"/>
    <property type="evidence" value="ECO:0007669"/>
    <property type="project" value="UniProtKB-KW"/>
</dbReference>
<dbReference type="GO" id="GO:0006048">
    <property type="term" value="P:UDP-N-acetylglucosamine biosynthetic process"/>
    <property type="evidence" value="ECO:0007669"/>
    <property type="project" value="UniProtKB-UniPathway"/>
</dbReference>
<dbReference type="CDD" id="cd02540">
    <property type="entry name" value="GT2_GlmU_N_bac"/>
    <property type="match status" value="1"/>
</dbReference>
<dbReference type="CDD" id="cd03353">
    <property type="entry name" value="LbH_GlmU_C"/>
    <property type="match status" value="1"/>
</dbReference>
<dbReference type="Gene3D" id="2.160.10.10">
    <property type="entry name" value="Hexapeptide repeat proteins"/>
    <property type="match status" value="1"/>
</dbReference>
<dbReference type="Gene3D" id="3.90.550.10">
    <property type="entry name" value="Spore Coat Polysaccharide Biosynthesis Protein SpsA, Chain A"/>
    <property type="match status" value="1"/>
</dbReference>
<dbReference type="HAMAP" id="MF_01631">
    <property type="entry name" value="GlmU"/>
    <property type="match status" value="1"/>
</dbReference>
<dbReference type="InterPro" id="IPR005882">
    <property type="entry name" value="Bifunctional_GlmU"/>
</dbReference>
<dbReference type="InterPro" id="IPR050065">
    <property type="entry name" value="GlmU-like"/>
</dbReference>
<dbReference type="InterPro" id="IPR038009">
    <property type="entry name" value="GlmU_C_LbH"/>
</dbReference>
<dbReference type="InterPro" id="IPR025877">
    <property type="entry name" value="MobA-like_NTP_Trfase"/>
</dbReference>
<dbReference type="InterPro" id="IPR029044">
    <property type="entry name" value="Nucleotide-diphossugar_trans"/>
</dbReference>
<dbReference type="InterPro" id="IPR011004">
    <property type="entry name" value="Trimer_LpxA-like_sf"/>
</dbReference>
<dbReference type="NCBIfam" id="TIGR01173">
    <property type="entry name" value="glmU"/>
    <property type="match status" value="1"/>
</dbReference>
<dbReference type="NCBIfam" id="NF010932">
    <property type="entry name" value="PRK14352.1"/>
    <property type="match status" value="1"/>
</dbReference>
<dbReference type="PANTHER" id="PTHR43584:SF3">
    <property type="entry name" value="BIFUNCTIONAL PROTEIN GLMU"/>
    <property type="match status" value="1"/>
</dbReference>
<dbReference type="PANTHER" id="PTHR43584">
    <property type="entry name" value="NUCLEOTIDYL TRANSFERASE"/>
    <property type="match status" value="1"/>
</dbReference>
<dbReference type="Pfam" id="PF12804">
    <property type="entry name" value="NTP_transf_3"/>
    <property type="match status" value="1"/>
</dbReference>
<dbReference type="SUPFAM" id="SSF53448">
    <property type="entry name" value="Nucleotide-diphospho-sugar transferases"/>
    <property type="match status" value="1"/>
</dbReference>
<dbReference type="SUPFAM" id="SSF51161">
    <property type="entry name" value="Trimeric LpxA-like enzymes"/>
    <property type="match status" value="1"/>
</dbReference>
<name>GLMU_PSECP</name>
<gene>
    <name evidence="1" type="primary">glmU</name>
    <name type="ordered locus">Achl_1287</name>
</gene>
<accession>B8HFD9</accession>
<organism>
    <name type="scientific">Pseudarthrobacter chlorophenolicus (strain ATCC 700700 / DSM 12829 / CIP 107037 / JCM 12360 / KCTC 9906 / NCIMB 13794 / A6)</name>
    <name type="common">Arthrobacter chlorophenolicus</name>
    <dbReference type="NCBI Taxonomy" id="452863"/>
    <lineage>
        <taxon>Bacteria</taxon>
        <taxon>Bacillati</taxon>
        <taxon>Actinomycetota</taxon>
        <taxon>Actinomycetes</taxon>
        <taxon>Micrococcales</taxon>
        <taxon>Micrococcaceae</taxon>
        <taxon>Pseudarthrobacter</taxon>
    </lineage>
</organism>
<reference key="1">
    <citation type="submission" date="2009-01" db="EMBL/GenBank/DDBJ databases">
        <title>Complete sequence of chromosome of Arthrobacter chlorophenolicus A6.</title>
        <authorList>
            <consortium name="US DOE Joint Genome Institute"/>
            <person name="Lucas S."/>
            <person name="Copeland A."/>
            <person name="Lapidus A."/>
            <person name="Glavina del Rio T."/>
            <person name="Tice H."/>
            <person name="Bruce D."/>
            <person name="Goodwin L."/>
            <person name="Pitluck S."/>
            <person name="Goltsman E."/>
            <person name="Clum A."/>
            <person name="Larimer F."/>
            <person name="Land M."/>
            <person name="Hauser L."/>
            <person name="Kyrpides N."/>
            <person name="Mikhailova N."/>
            <person name="Jansson J."/>
            <person name="Richardson P."/>
        </authorList>
    </citation>
    <scope>NUCLEOTIDE SEQUENCE [LARGE SCALE GENOMIC DNA]</scope>
    <source>
        <strain>ATCC 700700 / DSM 12829 / CIP 107037 / JCM 12360 / KCTC 9906 / NCIMB 13794 / A6</strain>
    </source>
</reference>